<comment type="function">
    <text evidence="1 3 7">Reversibly transfers an adenylyl group from ATP to 4'-phosphopantetheine, yielding dephospho-CoA (dPCoA) and pyrophosphate (PubMed:10480925, PubMed:17873050). CoA is not a substrate for the enzyme (PubMed:10480925).</text>
</comment>
<comment type="catalytic activity">
    <reaction evidence="1 3 7">
        <text>(R)-4'-phosphopantetheine + ATP + H(+) = 3'-dephospho-CoA + diphosphate</text>
        <dbReference type="Rhea" id="RHEA:19801"/>
        <dbReference type="ChEBI" id="CHEBI:15378"/>
        <dbReference type="ChEBI" id="CHEBI:30616"/>
        <dbReference type="ChEBI" id="CHEBI:33019"/>
        <dbReference type="ChEBI" id="CHEBI:57328"/>
        <dbReference type="ChEBI" id="CHEBI:61723"/>
        <dbReference type="EC" id="2.7.7.3"/>
    </reaction>
</comment>
<comment type="cofactor">
    <cofactor evidence="4">
        <name>Mg(2+)</name>
        <dbReference type="ChEBI" id="CHEBI:18420"/>
    </cofactor>
    <text evidence="12">Crystallized in the absence of Mg(2+), the catalytic metal is not bound by the protein but probably by non-esterified oxygen atoms from ATP and/or ordered H(2)O (PubMed:11812124).</text>
</comment>
<comment type="activity regulation">
    <text evidence="5 6 7 8 11">Feedback inhibited by CoA, which is competitive with ATP, 4'-phosphopantetheine and 3'-dephospho-CoA (PubMed:10480925, PubMed:17873050). Binds 0.5 CoA tightly per monomer in the same position as 3'-dephospho-CoA but in a different fashion (PubMed:12837781, PubMed:17873050). Is inhibited by the very potent and specific inhibitor PTX042695 dipeptide, with an IC(50) of 6 nM, a compound which has no activity against porcine PPAT (PubMed:12750020). A series of pyrazoloquinolones were also characterized as ATP-competitive inhibitors of PPAT (PubMed:20486930).</text>
</comment>
<comment type="biophysicochemical properties">
    <kinetics>
        <KM evidence="3">7 uM for 3'-dephospho-CoA</KM>
        <KM evidence="7">17 uM for 3'-dephospho-CoA</KM>
        <KM evidence="3">0.22 mM for diphosphate</KM>
        <KM evidence="7">0.23 mM for diphosphate</KM>
        <KM evidence="7">220 uM for ATP</KM>
        <KM evidence="7">4.7 uM for 4'-phosphopantetheine</KM>
        <text evidence="3 7">kcat is 1.37 sec(-1) for the forward reaction, with ATP and pantetheine 4'-phosphate as substrates (PubMed:17873050). kcat is 3.3 sec(-1) for the reverse reaction, with diphosphate and 3'-dephospho-CoA as substrates (PubMed:10480925). kcat is 1.37 sec(-1) for the reverse reaction, with diphosphate and 3'-dephospho-CoA as substrates (PubMed:17873050).</text>
    </kinetics>
    <phDependence>
        <text evidence="3">Optimum pH is 6.9.</text>
    </phDependence>
</comment>
<comment type="pathway">
    <text evidence="1">Cofactor biosynthesis; coenzyme A biosynthesis; CoA from (R)-pantothenate: step 4/5.</text>
</comment>
<comment type="subunit">
    <text evidence="2 3 4 6 7">Homohexamer, a dimerized trimer with a solvent channel through the middle (PubMed:10205156, PubMed:10480925, PubMed:11812124, PubMed:12837781, PubMed:17873050). In crystals only 1 trimer is seen to bind substrate/product at a time (PubMed:10205156, PubMed:11812124).</text>
</comment>
<comment type="interaction">
    <interactant intactId="EBI-553173">
        <id>P0A6I6</id>
    </interactant>
    <interactant intactId="EBI-545597">
        <id>P60723</id>
        <label>rplD</label>
    </interactant>
    <organismsDiffer>false</organismsDiffer>
    <experiments>2</experiments>
</comment>
<comment type="subcellular location">
    <subcellularLocation>
        <location evidence="1">Cytoplasm</location>
    </subcellularLocation>
</comment>
<comment type="miscellaneous">
    <text evidence="12">The crystal structures in complex with substrates suggest the enzyme stabilizes the transition state but the functional groups of the enzyme are not directly involved in reaction catalysis.</text>
</comment>
<comment type="similarity">
    <text evidence="1">Belongs to the bacterial CoaD family.</text>
</comment>
<comment type="caution">
    <text evidence="13">Was originally thought to have an essential function in lipopolysaccharide biosynthesis.</text>
</comment>
<sequence length="159" mass="17837">MQKRAIYPGTFDPITNGHIDIVTRATQMFDHVILAIAASPSKKPMFTLEERVALAQQATAHLGNVEVVGFSDLMANFARNQHATVLIRGLRAVADFEYEMQLAHMNRHLMPELESVFLMPSKEWSFISSSLVKEVARHQGDVTHFLPENVHQALMAKLA</sequence>
<dbReference type="EC" id="2.7.7.3" evidence="1 3 7"/>
<dbReference type="EMBL" id="M60670">
    <property type="protein sequence ID" value="AAA24044.1"/>
    <property type="molecule type" value="Genomic_DNA"/>
</dbReference>
<dbReference type="EMBL" id="M86305">
    <property type="protein sequence ID" value="AAA03746.1"/>
    <property type="molecule type" value="Genomic_DNA"/>
</dbReference>
<dbReference type="EMBL" id="U00039">
    <property type="protein sequence ID" value="AAB18611.1"/>
    <property type="molecule type" value="Genomic_DNA"/>
</dbReference>
<dbReference type="EMBL" id="U00096">
    <property type="protein sequence ID" value="AAC76658.1"/>
    <property type="molecule type" value="Genomic_DNA"/>
</dbReference>
<dbReference type="EMBL" id="AP009048">
    <property type="protein sequence ID" value="BAE77658.1"/>
    <property type="molecule type" value="Genomic_DNA"/>
</dbReference>
<dbReference type="PIR" id="JU0468">
    <property type="entry name" value="JU0468"/>
</dbReference>
<dbReference type="RefSeq" id="NP_418091.1">
    <property type="nucleotide sequence ID" value="NC_000913.3"/>
</dbReference>
<dbReference type="RefSeq" id="WP_001171866.1">
    <property type="nucleotide sequence ID" value="NZ_STEB01000024.1"/>
</dbReference>
<dbReference type="PDB" id="1B6T">
    <property type="method" value="X-ray"/>
    <property type="resolution" value="1.80 A"/>
    <property type="chains" value="A/B=1-159"/>
</dbReference>
<dbReference type="PDB" id="1GN8">
    <property type="method" value="X-ray"/>
    <property type="resolution" value="1.83 A"/>
    <property type="chains" value="A/B=1-159"/>
</dbReference>
<dbReference type="PDB" id="1H1T">
    <property type="method" value="X-ray"/>
    <property type="resolution" value="1.78 A"/>
    <property type="chains" value="A/B=1-159"/>
</dbReference>
<dbReference type="PDB" id="1QJC">
    <property type="method" value="X-ray"/>
    <property type="resolution" value="1.63 A"/>
    <property type="chains" value="A/B=2-159"/>
</dbReference>
<dbReference type="PDB" id="5JBN">
    <property type="method" value="X-ray"/>
    <property type="resolution" value="1.45 A"/>
    <property type="chains" value="A/B=1-159"/>
</dbReference>
<dbReference type="PDB" id="6B7A">
    <property type="method" value="X-ray"/>
    <property type="resolution" value="1.99 A"/>
    <property type="chains" value="A/B=1-159"/>
</dbReference>
<dbReference type="PDB" id="6B7B">
    <property type="method" value="X-ray"/>
    <property type="resolution" value="1.98 A"/>
    <property type="chains" value="A/B=1-159"/>
</dbReference>
<dbReference type="PDB" id="6B7C">
    <property type="method" value="X-ray"/>
    <property type="resolution" value="1.56 A"/>
    <property type="chains" value="A/B=1-159"/>
</dbReference>
<dbReference type="PDB" id="6B7D">
    <property type="method" value="X-ray"/>
    <property type="resolution" value="1.80 A"/>
    <property type="chains" value="A/B=1-159"/>
</dbReference>
<dbReference type="PDB" id="6B7E">
    <property type="method" value="X-ray"/>
    <property type="resolution" value="2.10 A"/>
    <property type="chains" value="A/B=1-159"/>
</dbReference>
<dbReference type="PDB" id="6B7F">
    <property type="method" value="X-ray"/>
    <property type="resolution" value="2.56 A"/>
    <property type="chains" value="A/B=1-159"/>
</dbReference>
<dbReference type="PDB" id="6CCK">
    <property type="method" value="X-ray"/>
    <property type="resolution" value="1.61 A"/>
    <property type="chains" value="A/B=1-159"/>
</dbReference>
<dbReference type="PDB" id="6CCL">
    <property type="method" value="X-ray"/>
    <property type="resolution" value="1.77 A"/>
    <property type="chains" value="A/B=1-159"/>
</dbReference>
<dbReference type="PDB" id="6CCM">
    <property type="method" value="X-ray"/>
    <property type="resolution" value="1.79 A"/>
    <property type="chains" value="A/B=1-159"/>
</dbReference>
<dbReference type="PDB" id="6CCN">
    <property type="method" value="X-ray"/>
    <property type="resolution" value="1.87 A"/>
    <property type="chains" value="A/B=1-159"/>
</dbReference>
<dbReference type="PDB" id="6CCO">
    <property type="method" value="X-ray"/>
    <property type="resolution" value="1.82 A"/>
    <property type="chains" value="A/B=1-159"/>
</dbReference>
<dbReference type="PDB" id="6CCQ">
    <property type="method" value="X-ray"/>
    <property type="resolution" value="1.92 A"/>
    <property type="chains" value="A/B=1-159"/>
</dbReference>
<dbReference type="PDB" id="6CCS">
    <property type="method" value="X-ray"/>
    <property type="resolution" value="2.06 A"/>
    <property type="chains" value="A/B=1-159"/>
</dbReference>
<dbReference type="PDB" id="6CHL">
    <property type="method" value="X-ray"/>
    <property type="resolution" value="2.20 A"/>
    <property type="chains" value="A/B=1-159"/>
</dbReference>
<dbReference type="PDB" id="6CHM">
    <property type="method" value="X-ray"/>
    <property type="resolution" value="2.28 A"/>
    <property type="chains" value="A/B=1-159"/>
</dbReference>
<dbReference type="PDB" id="6CHN">
    <property type="method" value="X-ray"/>
    <property type="resolution" value="2.03 A"/>
    <property type="chains" value="A/B=1-159"/>
</dbReference>
<dbReference type="PDB" id="6CHO">
    <property type="method" value="X-ray"/>
    <property type="resolution" value="1.85 A"/>
    <property type="chains" value="A/B=1-159"/>
</dbReference>
<dbReference type="PDB" id="6CHP">
    <property type="method" value="X-ray"/>
    <property type="resolution" value="1.94 A"/>
    <property type="chains" value="A/B=1-159"/>
</dbReference>
<dbReference type="PDB" id="6CHQ">
    <property type="method" value="X-ray"/>
    <property type="resolution" value="1.79 A"/>
    <property type="chains" value="A/B=1-159"/>
</dbReference>
<dbReference type="PDB" id="6CKW">
    <property type="method" value="X-ray"/>
    <property type="resolution" value="2.06 A"/>
    <property type="chains" value="A/B=1-159"/>
</dbReference>
<dbReference type="PDBsum" id="1B6T"/>
<dbReference type="PDBsum" id="1GN8"/>
<dbReference type="PDBsum" id="1H1T"/>
<dbReference type="PDBsum" id="1QJC"/>
<dbReference type="PDBsum" id="5JBN"/>
<dbReference type="PDBsum" id="6B7A"/>
<dbReference type="PDBsum" id="6B7B"/>
<dbReference type="PDBsum" id="6B7C"/>
<dbReference type="PDBsum" id="6B7D"/>
<dbReference type="PDBsum" id="6B7E"/>
<dbReference type="PDBsum" id="6B7F"/>
<dbReference type="PDBsum" id="6CCK"/>
<dbReference type="PDBsum" id="6CCL"/>
<dbReference type="PDBsum" id="6CCM"/>
<dbReference type="PDBsum" id="6CCN"/>
<dbReference type="PDBsum" id="6CCO"/>
<dbReference type="PDBsum" id="6CCQ"/>
<dbReference type="PDBsum" id="6CCS"/>
<dbReference type="PDBsum" id="6CHL"/>
<dbReference type="PDBsum" id="6CHM"/>
<dbReference type="PDBsum" id="6CHN"/>
<dbReference type="PDBsum" id="6CHO"/>
<dbReference type="PDBsum" id="6CHP"/>
<dbReference type="PDBsum" id="6CHQ"/>
<dbReference type="PDBsum" id="6CKW"/>
<dbReference type="SMR" id="P0A6I6"/>
<dbReference type="BioGRID" id="4263379">
    <property type="interactions" value="242"/>
</dbReference>
<dbReference type="DIP" id="DIP-35966N"/>
<dbReference type="FunCoup" id="P0A6I6">
    <property type="interactions" value="674"/>
</dbReference>
<dbReference type="IntAct" id="P0A6I6">
    <property type="interactions" value="10"/>
</dbReference>
<dbReference type="STRING" id="511145.b3634"/>
<dbReference type="BindingDB" id="P0A6I6"/>
<dbReference type="ChEMBL" id="CHEMBL4523175"/>
<dbReference type="jPOST" id="P0A6I6"/>
<dbReference type="PaxDb" id="511145-b3634"/>
<dbReference type="EnsemblBacteria" id="AAC76658">
    <property type="protein sequence ID" value="AAC76658"/>
    <property type="gene ID" value="b3634"/>
</dbReference>
<dbReference type="GeneID" id="75202203"/>
<dbReference type="GeneID" id="947386"/>
<dbReference type="KEGG" id="ecj:JW3609"/>
<dbReference type="KEGG" id="eco:b3634"/>
<dbReference type="KEGG" id="ecoc:C3026_19695"/>
<dbReference type="PATRIC" id="fig|1411691.4.peg.3072"/>
<dbReference type="EchoBASE" id="EB1176"/>
<dbReference type="eggNOG" id="COG0669">
    <property type="taxonomic scope" value="Bacteria"/>
</dbReference>
<dbReference type="HOGENOM" id="CLU_100149_0_1_6"/>
<dbReference type="InParanoid" id="P0A6I6"/>
<dbReference type="OMA" id="MALMNRK"/>
<dbReference type="OrthoDB" id="9806661at2"/>
<dbReference type="PhylomeDB" id="P0A6I6"/>
<dbReference type="BioCyc" id="EcoCyc:PANTEPADENYLYLTRAN-MONOMER"/>
<dbReference type="BioCyc" id="MetaCyc:PANTEPADENYLYLTRAN-MONOMER"/>
<dbReference type="BRENDA" id="2.7.7.3">
    <property type="organism ID" value="2026"/>
</dbReference>
<dbReference type="SABIO-RK" id="P0A6I6"/>
<dbReference type="UniPathway" id="UPA00241">
    <property type="reaction ID" value="UER00355"/>
</dbReference>
<dbReference type="EvolutionaryTrace" id="P0A6I6"/>
<dbReference type="PRO" id="PR:P0A6I6"/>
<dbReference type="Proteomes" id="UP000000625">
    <property type="component" value="Chromosome"/>
</dbReference>
<dbReference type="GO" id="GO:0005737">
    <property type="term" value="C:cytoplasm"/>
    <property type="evidence" value="ECO:0007669"/>
    <property type="project" value="UniProtKB-SubCell"/>
</dbReference>
<dbReference type="GO" id="GO:0005524">
    <property type="term" value="F:ATP binding"/>
    <property type="evidence" value="ECO:0007669"/>
    <property type="project" value="UniProtKB-KW"/>
</dbReference>
<dbReference type="GO" id="GO:0042802">
    <property type="term" value="F:identical protein binding"/>
    <property type="evidence" value="ECO:0000314"/>
    <property type="project" value="EcoCyc"/>
</dbReference>
<dbReference type="GO" id="GO:0004595">
    <property type="term" value="F:pantetheine-phosphate adenylyltransferase activity"/>
    <property type="evidence" value="ECO:0000314"/>
    <property type="project" value="EcoCyc"/>
</dbReference>
<dbReference type="GO" id="GO:0015937">
    <property type="term" value="P:coenzyme A biosynthetic process"/>
    <property type="evidence" value="ECO:0000314"/>
    <property type="project" value="EcoCyc"/>
</dbReference>
<dbReference type="CDD" id="cd02163">
    <property type="entry name" value="PPAT"/>
    <property type="match status" value="1"/>
</dbReference>
<dbReference type="FunFam" id="3.40.50.620:FF:000012">
    <property type="entry name" value="Phosphopantetheine adenylyltransferase"/>
    <property type="match status" value="1"/>
</dbReference>
<dbReference type="Gene3D" id="3.40.50.620">
    <property type="entry name" value="HUPs"/>
    <property type="match status" value="1"/>
</dbReference>
<dbReference type="HAMAP" id="MF_00151">
    <property type="entry name" value="PPAT_bact"/>
    <property type="match status" value="1"/>
</dbReference>
<dbReference type="InterPro" id="IPR004821">
    <property type="entry name" value="Cyt_trans-like"/>
</dbReference>
<dbReference type="InterPro" id="IPR001980">
    <property type="entry name" value="PPAT"/>
</dbReference>
<dbReference type="InterPro" id="IPR014729">
    <property type="entry name" value="Rossmann-like_a/b/a_fold"/>
</dbReference>
<dbReference type="NCBIfam" id="TIGR01510">
    <property type="entry name" value="coaD_prev_kdtB"/>
    <property type="match status" value="1"/>
</dbReference>
<dbReference type="NCBIfam" id="TIGR00125">
    <property type="entry name" value="cyt_tran_rel"/>
    <property type="match status" value="1"/>
</dbReference>
<dbReference type="PANTHER" id="PTHR21342">
    <property type="entry name" value="PHOSPHOPANTETHEINE ADENYLYLTRANSFERASE"/>
    <property type="match status" value="1"/>
</dbReference>
<dbReference type="PANTHER" id="PTHR21342:SF1">
    <property type="entry name" value="PHOSPHOPANTETHEINE ADENYLYLTRANSFERASE"/>
    <property type="match status" value="1"/>
</dbReference>
<dbReference type="Pfam" id="PF01467">
    <property type="entry name" value="CTP_transf_like"/>
    <property type="match status" value="1"/>
</dbReference>
<dbReference type="PRINTS" id="PR01020">
    <property type="entry name" value="LPSBIOSNTHSS"/>
</dbReference>
<dbReference type="SUPFAM" id="SSF52374">
    <property type="entry name" value="Nucleotidylyl transferase"/>
    <property type="match status" value="1"/>
</dbReference>
<evidence type="ECO:0000255" key="1">
    <source>
        <dbReference type="HAMAP-Rule" id="MF_00151"/>
    </source>
</evidence>
<evidence type="ECO:0000269" key="2">
    <source>
    </source>
</evidence>
<evidence type="ECO:0000269" key="3">
    <source>
    </source>
</evidence>
<evidence type="ECO:0000269" key="4">
    <source>
    </source>
</evidence>
<evidence type="ECO:0000269" key="5">
    <source>
    </source>
</evidence>
<evidence type="ECO:0000269" key="6">
    <source>
    </source>
</evidence>
<evidence type="ECO:0000269" key="7">
    <source>
    </source>
</evidence>
<evidence type="ECO:0000269" key="8">
    <source>
    </source>
</evidence>
<evidence type="ECO:0000303" key="9">
    <source>
    </source>
</evidence>
<evidence type="ECO:0000303" key="10">
    <source>
    </source>
</evidence>
<evidence type="ECO:0000305" key="11">
    <source>
    </source>
</evidence>
<evidence type="ECO:0000305" key="12">
    <source>
    </source>
</evidence>
<evidence type="ECO:0000305" key="13">
    <source>
    </source>
</evidence>
<evidence type="ECO:0007744" key="14">
    <source>
        <dbReference type="PDB" id="1GN8"/>
    </source>
</evidence>
<evidence type="ECO:0007744" key="15">
    <source>
        <dbReference type="PDB" id="1H1T"/>
    </source>
</evidence>
<evidence type="ECO:0007744" key="16">
    <source>
        <dbReference type="PDB" id="1QJC"/>
    </source>
</evidence>
<evidence type="ECO:0007829" key="17">
    <source>
        <dbReference type="PDB" id="5JBN"/>
    </source>
</evidence>
<keyword id="KW-0002">3D-structure</keyword>
<keyword id="KW-0067">ATP-binding</keyword>
<keyword id="KW-0173">Coenzyme A biosynthesis</keyword>
<keyword id="KW-0963">Cytoplasm</keyword>
<keyword id="KW-0903">Direct protein sequencing</keyword>
<keyword id="KW-0460">Magnesium</keyword>
<keyword id="KW-0547">Nucleotide-binding</keyword>
<keyword id="KW-0548">Nucleotidyltransferase</keyword>
<keyword id="KW-1185">Reference proteome</keyword>
<keyword id="KW-0808">Transferase</keyword>
<name>COAD_ECOLI</name>
<accession>P0A6I6</accession>
<accession>P23875</accession>
<accession>Q2M7U8</accession>
<gene>
    <name evidence="1 9" type="primary">coaD</name>
    <name evidence="10" type="synonym">kdtB</name>
    <name type="synonym">yicA</name>
    <name type="ordered locus">b3634</name>
    <name type="ordered locus">JW3609</name>
</gene>
<protein>
    <recommendedName>
        <fullName evidence="1 9">Phosphopantetheine adenylyltransferase</fullName>
        <ecNumber evidence="1 3 7">2.7.7.3</ecNumber>
    </recommendedName>
    <alternativeName>
        <fullName evidence="1">Dephospho-CoA pyrophosphorylase</fullName>
    </alternativeName>
    <alternativeName>
        <fullName evidence="1">Pantetheine-phosphate adenylyltransferase</fullName>
        <shortName evidence="1 9">PPAT</shortName>
    </alternativeName>
</protein>
<proteinExistence type="evidence at protein level"/>
<feature type="chain" id="PRO_0000156204" description="Phosphopantetheine adenylyltransferase">
    <location>
        <begin position="1"/>
        <end position="159"/>
    </location>
</feature>
<feature type="binding site" evidence="4 14">
    <location>
        <begin position="7"/>
        <end position="11"/>
    </location>
    <ligand>
        <name>ATP</name>
        <dbReference type="ChEBI" id="CHEBI:30616"/>
    </ligand>
</feature>
<feature type="binding site" evidence="4 6 15 16">
    <location>
        <position position="10"/>
    </location>
    <ligand>
        <name>substrate</name>
    </ligand>
</feature>
<feature type="binding site" evidence="4 14">
    <location>
        <position position="18"/>
    </location>
    <ligand>
        <name>ATP</name>
        <dbReference type="ChEBI" id="CHEBI:30616"/>
    </ligand>
</feature>
<feature type="binding site" evidence="4 6 15 16">
    <location>
        <position position="42"/>
    </location>
    <ligand>
        <name>substrate</name>
    </ligand>
</feature>
<feature type="binding site" evidence="4 6 15 16">
    <location>
        <position position="74"/>
    </location>
    <ligand>
        <name>substrate</name>
    </ligand>
</feature>
<feature type="binding site" evidence="4 16">
    <location>
        <position position="88"/>
    </location>
    <ligand>
        <name>substrate</name>
    </ligand>
</feature>
<feature type="binding site" evidence="4 14">
    <location>
        <begin position="89"/>
        <end position="91"/>
    </location>
    <ligand>
        <name>ATP</name>
        <dbReference type="ChEBI" id="CHEBI:30616"/>
    </ligand>
</feature>
<feature type="binding site" evidence="4 14">
    <location>
        <position position="99"/>
    </location>
    <ligand>
        <name>ATP</name>
        <dbReference type="ChEBI" id="CHEBI:30616"/>
    </ligand>
</feature>
<feature type="binding site" evidence="4 14">
    <location>
        <begin position="124"/>
        <end position="130"/>
    </location>
    <ligand>
        <name>ATP</name>
        <dbReference type="ChEBI" id="CHEBI:30616"/>
    </ligand>
</feature>
<feature type="site" description="Transition state stabilizer" evidence="12">
    <location>
        <position position="18"/>
    </location>
</feature>
<feature type="strand" evidence="17">
    <location>
        <begin position="4"/>
        <end position="9"/>
    </location>
</feature>
<feature type="helix" evidence="17">
    <location>
        <begin position="16"/>
        <end position="28"/>
    </location>
</feature>
<feature type="strand" evidence="17">
    <location>
        <begin position="29"/>
        <end position="37"/>
    </location>
</feature>
<feature type="helix" evidence="17">
    <location>
        <begin position="40"/>
        <end position="42"/>
    </location>
</feature>
<feature type="helix" evidence="17">
    <location>
        <begin position="48"/>
        <end position="58"/>
    </location>
</feature>
<feature type="turn" evidence="17">
    <location>
        <begin position="59"/>
        <end position="61"/>
    </location>
</feature>
<feature type="strand" evidence="17">
    <location>
        <begin position="65"/>
        <end position="70"/>
    </location>
</feature>
<feature type="helix" evidence="17">
    <location>
        <begin position="74"/>
        <end position="80"/>
    </location>
</feature>
<feature type="strand" evidence="17">
    <location>
        <begin position="85"/>
        <end position="89"/>
    </location>
</feature>
<feature type="helix" evidence="17">
    <location>
        <begin position="96"/>
        <end position="109"/>
    </location>
</feature>
<feature type="strand" evidence="17">
    <location>
        <begin position="113"/>
        <end position="118"/>
    </location>
</feature>
<feature type="helix" evidence="17">
    <location>
        <begin position="122"/>
        <end position="124"/>
    </location>
</feature>
<feature type="helix" evidence="17">
    <location>
        <begin position="129"/>
        <end position="137"/>
    </location>
</feature>
<feature type="helix" evidence="17">
    <location>
        <begin position="143"/>
        <end position="145"/>
    </location>
</feature>
<feature type="helix" evidence="17">
    <location>
        <begin position="148"/>
        <end position="159"/>
    </location>
</feature>
<reference key="1">
    <citation type="journal article" date="1991" name="J. Biol. Chem.">
        <title>A gene coding for 3-deoxy-D-manno-octulosonic-acid transferase in Escherichia coli. Identification, mapping, cloning, and sequencing.</title>
        <authorList>
            <person name="Clementz T."/>
            <person name="Raetz C.R.H."/>
        </authorList>
    </citation>
    <scope>NUCLEOTIDE SEQUENCE [GENOMIC DNA]</scope>
    <source>
        <strain>K12</strain>
    </source>
</reference>
<reference key="2">
    <citation type="journal article" date="1994" name="Nucleic Acids Res.">
        <title>Analysis of the Escherichia coli genome. V. DNA sequence of the region from 76.0 to 81.5 minutes.</title>
        <authorList>
            <person name="Sofia H.J."/>
            <person name="Burland V."/>
            <person name="Daniels D.L."/>
            <person name="Plunkett G. III"/>
            <person name="Blattner F.R."/>
        </authorList>
    </citation>
    <scope>NUCLEOTIDE SEQUENCE [LARGE SCALE GENOMIC DNA]</scope>
    <source>
        <strain>K12 / MG1655 / ATCC 47076</strain>
    </source>
</reference>
<reference key="3">
    <citation type="journal article" date="1997" name="Science">
        <title>The complete genome sequence of Escherichia coli K-12.</title>
        <authorList>
            <person name="Blattner F.R."/>
            <person name="Plunkett G. III"/>
            <person name="Bloch C.A."/>
            <person name="Perna N.T."/>
            <person name="Burland V."/>
            <person name="Riley M."/>
            <person name="Collado-Vides J."/>
            <person name="Glasner J.D."/>
            <person name="Rode C.K."/>
            <person name="Mayhew G.F."/>
            <person name="Gregor J."/>
            <person name="Davis N.W."/>
            <person name="Kirkpatrick H.A."/>
            <person name="Goeden M.A."/>
            <person name="Rose D.J."/>
            <person name="Mau B."/>
            <person name="Shao Y."/>
        </authorList>
    </citation>
    <scope>NUCLEOTIDE SEQUENCE [LARGE SCALE GENOMIC DNA]</scope>
    <source>
        <strain>K12 / MG1655 / ATCC 47076</strain>
    </source>
</reference>
<reference key="4">
    <citation type="journal article" date="2006" name="Mol. Syst. Biol.">
        <title>Highly accurate genome sequences of Escherichia coli K-12 strains MG1655 and W3110.</title>
        <authorList>
            <person name="Hayashi K."/>
            <person name="Morooka N."/>
            <person name="Yamamoto Y."/>
            <person name="Fujita K."/>
            <person name="Isono K."/>
            <person name="Choi S."/>
            <person name="Ohtsubo E."/>
            <person name="Baba T."/>
            <person name="Wanner B.L."/>
            <person name="Mori H."/>
            <person name="Horiuchi T."/>
        </authorList>
    </citation>
    <scope>NUCLEOTIDE SEQUENCE [LARGE SCALE GENOMIC DNA]</scope>
    <source>
        <strain>K12 / W3110 / ATCC 27325 / DSM 5911</strain>
    </source>
</reference>
<reference key="5">
    <citation type="journal article" date="1999" name="J. Biol. Chem.">
        <title>Purification and characterization of phosphopantetheine adenylyltransferase from Escherichia coli.</title>
        <authorList>
            <person name="Geerlof A."/>
            <person name="Lewendon A."/>
            <person name="Shaw W.V."/>
        </authorList>
    </citation>
    <scope>PROTEIN SEQUENCE OF 1-10</scope>
    <scope>FUNCTION</scope>
    <scope>CATALYTIC ACTIVITY</scope>
    <scope>POSSIBLE ACTIVITY REGULATION</scope>
    <scope>BIOPHYSICOCHEMICAL PROPERTIES</scope>
    <scope>SUBUNIT</scope>
    <scope>COA-BINDING</scope>
    <source>
        <strain>K12 / JM101 / ATCC 33876 / DSM 3948 / NCIMB 11926</strain>
    </source>
</reference>
<reference key="6">
    <citation type="journal article" date="1992" name="J. Bacteriol.">
        <title>Genetic analysis of the genes involved in synthesis of the lipopolysaccharide core in Escherichia coli K-12: three operons in the rfa locus.</title>
        <authorList>
            <person name="Roncero C."/>
            <person name="Casadaban M.J."/>
        </authorList>
    </citation>
    <scope>GENETIC CHARACTERIZATION</scope>
    <source>
        <strain>K12</strain>
    </source>
</reference>
<reference key="7">
    <citation type="journal article" date="2003" name="Eur. J. Med. Chem.">
        <title>Inhibitors of phosphopantetheine adenylyltransferase.</title>
        <authorList>
            <person name="Zhao L."/>
            <person name="Allanson N.M."/>
            <person name="Thomson S.P."/>
            <person name="Maclean J.K."/>
            <person name="Barker J.J."/>
            <person name="Primrose W.U."/>
            <person name="Tyler P.D."/>
            <person name="Lewendon A."/>
        </authorList>
    </citation>
    <scope>ACTIVITY REGULATION</scope>
</reference>
<reference key="8">
    <citation type="journal article" date="2007" name="J. Bacteriol.">
        <title>Phosphopantetheine adenylyltransferase from Escherichia coli: investigation of the kinetic mechanism and role in regulation of coenzyme A biosynthesis.</title>
        <authorList>
            <person name="Miller J.R."/>
            <person name="Ohren J."/>
            <person name="Sarver R.W."/>
            <person name="Mueller W.T."/>
            <person name="de Dreu P."/>
            <person name="Case H."/>
            <person name="Thanabal V."/>
        </authorList>
    </citation>
    <scope>FUNCTION</scope>
    <scope>CATALYTIC ACTIVITY</scope>
    <scope>ACTIVITY REGULATION</scope>
    <scope>BIOPHYSICOCHEMICAL PROPERTIES</scope>
    <scope>SUBUNIT</scope>
    <scope>COA-BINDING</scope>
    <source>
        <strain>K12 / JL4</strain>
    </source>
</reference>
<reference key="9">
    <citation type="journal article" date="2010" name="Chem. Biol. Drug Des.">
        <title>The use of biochemical and biophysical tools for triage of high-throughput screening hits - A case study with Escherichia coli phosphopantetheine adenylyltransferase.</title>
        <authorList>
            <person name="Miller J.R."/>
            <person name="Thanabal V."/>
            <person name="Melnick M.M."/>
            <person name="Lall M."/>
            <person name="Donovan C."/>
            <person name="Sarver R.W."/>
            <person name="Lee D.Y."/>
            <person name="Ohren J."/>
            <person name="Emerson D."/>
        </authorList>
    </citation>
    <scope>ACTIVITY REGULATION</scope>
    <scope>INHIBITOR SCREENING</scope>
</reference>
<reference key="10">
    <citation type="journal article" date="1999" name="EMBO J.">
        <title>The crystal structure of a novel bacterial adenylyltransferase reveals half of sites reactivity.</title>
        <authorList>
            <person name="Izard T."/>
            <person name="Geerlof A."/>
        </authorList>
    </citation>
    <scope>X-RAY CRYSTALLOGRAPHY (1.8 ANGSTROMS) IN COMPLEX WITH 3'-DEPHOSPHO-COA</scope>
    <scope>SUBUNIT</scope>
</reference>
<reference key="11">
    <citation type="journal article" date="2002" name="J. Mol. Biol.">
        <title>The crystal structures of phosphopantetheine adenylyltransferase with bound substrates reveal the enzyme's catalytic mechanism.</title>
        <authorList>
            <person name="Izard T."/>
        </authorList>
    </citation>
    <scope>X-RAY CRYSTALLOGRAPHY (1.63 ANGSTROMS) IN COMPLEXES WITH ATP OR 4'-PHOSPHOPANTETHEINE</scope>
    <scope>COFACTOR</scope>
    <scope>REACTION MECHANISM</scope>
    <scope>SITE</scope>
    <scope>SUBUNIT</scope>
</reference>
<reference key="12">
    <citation type="journal article" date="2003" name="J. Bacteriol.">
        <title>A novel adenylate binding site confers phosphopantetheine adenylyltransferase interactions with coenzyme A.</title>
        <authorList>
            <person name="Izard T."/>
        </authorList>
    </citation>
    <scope>X-RAY CRYSTALLOGRAPHY (1.78 ANGSTROMS) IN COMPLEX WITH COENZYME A AND 4'-PHOSPHOPANTETHEINE</scope>
    <scope>ACTIVITY REGULATION</scope>
    <scope>SUBUNIT</scope>
</reference>
<reference key="13">
    <citation type="journal article" date="2016" name="J. Biomol. NMR">
        <title>Facilitating unambiguous NMR assignments and enabling higher probe density through selective labeling of all methyl containing amino acids.</title>
        <authorList>
            <person name="Proudfoot A."/>
            <person name="Frank A.O."/>
            <person name="Ruggiu F."/>
            <person name="Mamo M."/>
            <person name="Lingel A."/>
        </authorList>
    </citation>
    <scope>X-RAY CRYSTALLOGRAPHY (1.45 ANGSTROMS)</scope>
</reference>
<organism>
    <name type="scientific">Escherichia coli (strain K12)</name>
    <dbReference type="NCBI Taxonomy" id="83333"/>
    <lineage>
        <taxon>Bacteria</taxon>
        <taxon>Pseudomonadati</taxon>
        <taxon>Pseudomonadota</taxon>
        <taxon>Gammaproteobacteria</taxon>
        <taxon>Enterobacterales</taxon>
        <taxon>Enterobacteriaceae</taxon>
        <taxon>Escherichia</taxon>
    </lineage>
</organism>